<gene>
    <name type="primary">AIPL1</name>
</gene>
<keyword id="KW-0963">Cytoplasm</keyword>
<keyword id="KW-0539">Nucleus</keyword>
<keyword id="KW-1185">Reference proteome</keyword>
<keyword id="KW-0677">Repeat</keyword>
<keyword id="KW-0802">TPR repeat</keyword>
<organism evidence="5">
    <name type="scientific">Bos taurus</name>
    <name type="common">Bovine</name>
    <dbReference type="NCBI Taxonomy" id="9913"/>
    <lineage>
        <taxon>Eukaryota</taxon>
        <taxon>Metazoa</taxon>
        <taxon>Chordata</taxon>
        <taxon>Craniata</taxon>
        <taxon>Vertebrata</taxon>
        <taxon>Euteleostomi</taxon>
        <taxon>Mammalia</taxon>
        <taxon>Eutheria</taxon>
        <taxon>Laurasiatheria</taxon>
        <taxon>Artiodactyla</taxon>
        <taxon>Ruminantia</taxon>
        <taxon>Pecora</taxon>
        <taxon>Bovidae</taxon>
        <taxon>Bovinae</taxon>
        <taxon>Bos</taxon>
    </lineage>
</organism>
<reference evidence="5" key="1">
    <citation type="journal article" date="2001" name="Mamm. Genome">
        <title>Comparative analysis of aryl-hydrocarbon receptor interacting protein-like 1 (Aipl1), a gene associated with inherited retinal disease in humans.</title>
        <authorList>
            <person name="Sohocki M.M."/>
            <person name="Sullivan L.S."/>
            <person name="Tirpak D.L."/>
            <person name="Daiger S.P."/>
        </authorList>
    </citation>
    <scope>NUCLEOTIDE SEQUENCE [MRNA]</scope>
    <source>
        <tissue evidence="2">Retina</tissue>
    </source>
</reference>
<reference evidence="4" key="2">
    <citation type="journal article" date="2002" name="Hum. Mol. Genet.">
        <title>The inherited blindness associated protein AIPL1 interacts with the cell cycle regulator protein NUB1.</title>
        <authorList>
            <person name="Akey D.T."/>
            <person name="Zhu X."/>
            <person name="Dyer M."/>
            <person name="Li A."/>
            <person name="Sorensen A."/>
            <person name="Blackshaw S."/>
            <person name="Fukuda-Kamitani T."/>
            <person name="Daiger S.P."/>
            <person name="Craft C.M."/>
            <person name="Kamitani T."/>
            <person name="Sohocki M.M."/>
        </authorList>
    </citation>
    <scope>INTERACTION WITH NUB1</scope>
</reference>
<name>AIPL1_BOVIN</name>
<proteinExistence type="evidence at protein level"/>
<sequence length="328" mass="38472">MDATLLLNVEGIKKTILHGGTGDLPNFITGARVTFHFRTMKCDEERTVIDDSKQVGHPMHIIIGNMFKLEVWEILLTSMRVSEVAEFWCDTIHTGVYPILSRSLRQMAEGKDPTEWHVHTCGLANMFAYHTLGYEDLDELQKEPQPLIFIIELLQVEAPSQYQRETWNLNNQEKMQAVPILHGEGNRLFKLGRYEEASNKYQEAIVCLRNLQTKEKPWEVQWLKLEKMINTLILNYCQCLLKKEEYYEVLEHTSDILRHHPGIVKAYYVRARAHAEVWNEAEAKADLEKVLELEPSMRKAVQRELRLLENRLEEKREEERLRCRNMLG</sequence>
<dbReference type="EMBL" id="AF296410">
    <property type="protein sequence ID" value="AAK77954.1"/>
    <property type="molecule type" value="mRNA"/>
</dbReference>
<dbReference type="RefSeq" id="NP_776659.1">
    <property type="nucleotide sequence ID" value="NM_174234.1"/>
</dbReference>
<dbReference type="SMR" id="Q95MP1"/>
<dbReference type="CORUM" id="Q95MP1"/>
<dbReference type="FunCoup" id="Q95MP1">
    <property type="interactions" value="107"/>
</dbReference>
<dbReference type="IntAct" id="Q95MP1">
    <property type="interactions" value="1"/>
</dbReference>
<dbReference type="STRING" id="9913.ENSBTAP00000010954"/>
<dbReference type="PaxDb" id="9913-ENSBTAP00000010954"/>
<dbReference type="Ensembl" id="ENSBTAT00000010954.7">
    <property type="protein sequence ID" value="ENSBTAP00000010954.6"/>
    <property type="gene ID" value="ENSBTAG00000008318.7"/>
</dbReference>
<dbReference type="GeneID" id="281609"/>
<dbReference type="KEGG" id="bta:281609"/>
<dbReference type="CTD" id="23746"/>
<dbReference type="VEuPathDB" id="HostDB:ENSBTAG00000008318"/>
<dbReference type="VGNC" id="VGNC:50178">
    <property type="gene designation" value="AIPL1"/>
</dbReference>
<dbReference type="eggNOG" id="KOG0545">
    <property type="taxonomic scope" value="Eukaryota"/>
</dbReference>
<dbReference type="GeneTree" id="ENSGT00390000001289"/>
<dbReference type="InParanoid" id="Q95MP1"/>
<dbReference type="OMA" id="EYDRETW"/>
<dbReference type="OrthoDB" id="5829758at2759"/>
<dbReference type="Proteomes" id="UP000009136">
    <property type="component" value="Chromosome 19"/>
</dbReference>
<dbReference type="Bgee" id="ENSBTAG00000008318">
    <property type="expression patterns" value="Expressed in retina and 9 other cell types or tissues"/>
</dbReference>
<dbReference type="GO" id="GO:0005829">
    <property type="term" value="C:cytosol"/>
    <property type="evidence" value="ECO:0007669"/>
    <property type="project" value="Ensembl"/>
</dbReference>
<dbReference type="GO" id="GO:0016607">
    <property type="term" value="C:nuclear speck"/>
    <property type="evidence" value="ECO:0007669"/>
    <property type="project" value="Ensembl"/>
</dbReference>
<dbReference type="GO" id="GO:0001917">
    <property type="term" value="C:photoreceptor inner segment"/>
    <property type="evidence" value="ECO:0007669"/>
    <property type="project" value="Ensembl"/>
</dbReference>
<dbReference type="GO" id="GO:0001918">
    <property type="term" value="F:farnesylated protein binding"/>
    <property type="evidence" value="ECO:0007669"/>
    <property type="project" value="Ensembl"/>
</dbReference>
<dbReference type="GO" id="GO:0003755">
    <property type="term" value="F:peptidyl-prolyl cis-trans isomerase activity"/>
    <property type="evidence" value="ECO:0007669"/>
    <property type="project" value="InterPro"/>
</dbReference>
<dbReference type="GO" id="GO:0006915">
    <property type="term" value="P:apoptotic process"/>
    <property type="evidence" value="ECO:0007669"/>
    <property type="project" value="Ensembl"/>
</dbReference>
<dbReference type="GO" id="GO:0043066">
    <property type="term" value="P:negative regulation of apoptotic process"/>
    <property type="evidence" value="ECO:0007669"/>
    <property type="project" value="Ensembl"/>
</dbReference>
<dbReference type="GO" id="GO:0007603">
    <property type="term" value="P:phototransduction, visible light"/>
    <property type="evidence" value="ECO:0007669"/>
    <property type="project" value="Ensembl"/>
</dbReference>
<dbReference type="GO" id="GO:0022400">
    <property type="term" value="P:regulation of opsin-mediated signaling pathway"/>
    <property type="evidence" value="ECO:0007669"/>
    <property type="project" value="Ensembl"/>
</dbReference>
<dbReference type="GO" id="GO:0001895">
    <property type="term" value="P:retina homeostasis"/>
    <property type="evidence" value="ECO:0007669"/>
    <property type="project" value="Ensembl"/>
</dbReference>
<dbReference type="FunFam" id="1.25.40.10:FF:000052">
    <property type="entry name" value="Aryl-hydrocarbon-interacting protein-like 1"/>
    <property type="match status" value="1"/>
</dbReference>
<dbReference type="FunFam" id="3.10.50.40:FF:000018">
    <property type="entry name" value="Aryl-hydrocarbon-interacting protein-like 1"/>
    <property type="match status" value="1"/>
</dbReference>
<dbReference type="Gene3D" id="3.10.50.40">
    <property type="match status" value="1"/>
</dbReference>
<dbReference type="Gene3D" id="1.25.40.10">
    <property type="entry name" value="Tetratricopeptide repeat domain"/>
    <property type="match status" value="1"/>
</dbReference>
<dbReference type="InterPro" id="IPR039663">
    <property type="entry name" value="AIP/AIPL1/TTC9"/>
</dbReference>
<dbReference type="InterPro" id="IPR056277">
    <property type="entry name" value="PPIase_AIP"/>
</dbReference>
<dbReference type="InterPro" id="IPR046357">
    <property type="entry name" value="PPIase_dom_sf"/>
</dbReference>
<dbReference type="InterPro" id="IPR011990">
    <property type="entry name" value="TPR-like_helical_dom_sf"/>
</dbReference>
<dbReference type="InterPro" id="IPR019734">
    <property type="entry name" value="TPR_rpt"/>
</dbReference>
<dbReference type="PANTHER" id="PTHR11242">
    <property type="entry name" value="ARYL HYDROCARBON RECEPTOR INTERACTING PROTEIN RELATED"/>
    <property type="match status" value="1"/>
</dbReference>
<dbReference type="PANTHER" id="PTHR11242:SF2">
    <property type="entry name" value="ARYL-HYDROCARBON-INTERACTING PROTEIN-LIKE 1"/>
    <property type="match status" value="1"/>
</dbReference>
<dbReference type="Pfam" id="PF23322">
    <property type="entry name" value="PPIase_AIP"/>
    <property type="match status" value="1"/>
</dbReference>
<dbReference type="SMART" id="SM00028">
    <property type="entry name" value="TPR"/>
    <property type="match status" value="2"/>
</dbReference>
<dbReference type="SUPFAM" id="SSF54534">
    <property type="entry name" value="FKBP-like"/>
    <property type="match status" value="1"/>
</dbReference>
<dbReference type="SUPFAM" id="SSF48452">
    <property type="entry name" value="TPR-like"/>
    <property type="match status" value="1"/>
</dbReference>
<dbReference type="PROSITE" id="PS50293">
    <property type="entry name" value="TPR_REGION"/>
    <property type="match status" value="2"/>
</dbReference>
<protein>
    <recommendedName>
        <fullName>Aryl-hydrocarbon-interacting protein-like 1</fullName>
    </recommendedName>
</protein>
<feature type="chain" id="PRO_0000075341" description="Aryl-hydrocarbon-interacting protein-like 1">
    <location>
        <begin position="1"/>
        <end position="328"/>
    </location>
</feature>
<feature type="domain" description="PPIase FKBP-type">
    <location>
        <begin position="53"/>
        <end position="145"/>
    </location>
</feature>
<feature type="repeat" description="TPR 1">
    <location>
        <begin position="178"/>
        <end position="211"/>
    </location>
</feature>
<feature type="repeat" description="TPR 2">
    <location>
        <begin position="230"/>
        <end position="263"/>
    </location>
</feature>
<feature type="repeat" description="TPR 3">
    <location>
        <begin position="264"/>
        <end position="297"/>
    </location>
</feature>
<evidence type="ECO:0000250" key="1"/>
<evidence type="ECO:0000269" key="2">
    <source>
    </source>
</evidence>
<evidence type="ECO:0000269" key="3">
    <source>
    </source>
</evidence>
<evidence type="ECO:0000305" key="4"/>
<evidence type="ECO:0000312" key="5">
    <source>
        <dbReference type="EMBL" id="AAK77954.1"/>
    </source>
</evidence>
<comment type="function">
    <text>May be important in protein trafficking and/or protein folding and stabilization.</text>
</comment>
<comment type="subunit">
    <text evidence="3">Directly interacts with NUB1.</text>
</comment>
<comment type="subcellular location">
    <subcellularLocation>
        <location evidence="1">Cytoplasm</location>
    </subcellularLocation>
    <subcellularLocation>
        <location evidence="1">Nucleus</location>
    </subcellularLocation>
</comment>
<accession>Q95MP1</accession>